<keyword id="KW-0227">DNA damage</keyword>
<keyword id="KW-0234">DNA repair</keyword>
<keyword id="KW-0235">DNA replication</keyword>
<keyword id="KW-0436">Ligase</keyword>
<keyword id="KW-0460">Magnesium</keyword>
<keyword id="KW-0464">Manganese</keyword>
<keyword id="KW-0479">Metal-binding</keyword>
<keyword id="KW-0520">NAD</keyword>
<keyword id="KW-0862">Zinc</keyword>
<feature type="chain" id="PRO_0000380416" description="DNA ligase">
    <location>
        <begin position="1"/>
        <end position="689"/>
    </location>
</feature>
<feature type="domain" description="BRCT" evidence="1">
    <location>
        <begin position="611"/>
        <end position="689"/>
    </location>
</feature>
<feature type="active site" description="N6-AMP-lysine intermediate" evidence="1">
    <location>
        <position position="140"/>
    </location>
</feature>
<feature type="binding site" evidence="1">
    <location>
        <begin position="58"/>
        <end position="62"/>
    </location>
    <ligand>
        <name>NAD(+)</name>
        <dbReference type="ChEBI" id="CHEBI:57540"/>
    </ligand>
</feature>
<feature type="binding site" evidence="1">
    <location>
        <begin position="107"/>
        <end position="108"/>
    </location>
    <ligand>
        <name>NAD(+)</name>
        <dbReference type="ChEBI" id="CHEBI:57540"/>
    </ligand>
</feature>
<feature type="binding site" evidence="1">
    <location>
        <position position="138"/>
    </location>
    <ligand>
        <name>NAD(+)</name>
        <dbReference type="ChEBI" id="CHEBI:57540"/>
    </ligand>
</feature>
<feature type="binding site" evidence="1">
    <location>
        <position position="161"/>
    </location>
    <ligand>
        <name>NAD(+)</name>
        <dbReference type="ChEBI" id="CHEBI:57540"/>
    </ligand>
</feature>
<feature type="binding site" evidence="1">
    <location>
        <position position="198"/>
    </location>
    <ligand>
        <name>NAD(+)</name>
        <dbReference type="ChEBI" id="CHEBI:57540"/>
    </ligand>
</feature>
<feature type="binding site" evidence="1">
    <location>
        <position position="314"/>
    </location>
    <ligand>
        <name>NAD(+)</name>
        <dbReference type="ChEBI" id="CHEBI:57540"/>
    </ligand>
</feature>
<feature type="binding site" evidence="1">
    <location>
        <position position="338"/>
    </location>
    <ligand>
        <name>NAD(+)</name>
        <dbReference type="ChEBI" id="CHEBI:57540"/>
    </ligand>
</feature>
<feature type="binding site" evidence="1">
    <location>
        <position position="432"/>
    </location>
    <ligand>
        <name>Zn(2+)</name>
        <dbReference type="ChEBI" id="CHEBI:29105"/>
    </ligand>
</feature>
<feature type="binding site" evidence="1">
    <location>
        <position position="435"/>
    </location>
    <ligand>
        <name>Zn(2+)</name>
        <dbReference type="ChEBI" id="CHEBI:29105"/>
    </ligand>
</feature>
<feature type="binding site" evidence="1">
    <location>
        <position position="448"/>
    </location>
    <ligand>
        <name>Zn(2+)</name>
        <dbReference type="ChEBI" id="CHEBI:29105"/>
    </ligand>
</feature>
<feature type="binding site" evidence="1">
    <location>
        <position position="453"/>
    </location>
    <ligand>
        <name>Zn(2+)</name>
        <dbReference type="ChEBI" id="CHEBI:29105"/>
    </ligand>
</feature>
<comment type="function">
    <text evidence="1">DNA ligase that catalyzes the formation of phosphodiester linkages between 5'-phosphoryl and 3'-hydroxyl groups in double-stranded DNA using NAD as a coenzyme and as the energy source for the reaction. It is essential for DNA replication and repair of damaged DNA.</text>
</comment>
<comment type="catalytic activity">
    <reaction evidence="1">
        <text>NAD(+) + (deoxyribonucleotide)n-3'-hydroxyl + 5'-phospho-(deoxyribonucleotide)m = (deoxyribonucleotide)n+m + AMP + beta-nicotinamide D-nucleotide.</text>
        <dbReference type="EC" id="6.5.1.2"/>
    </reaction>
</comment>
<comment type="cofactor">
    <cofactor evidence="1">
        <name>Mg(2+)</name>
        <dbReference type="ChEBI" id="CHEBI:18420"/>
    </cofactor>
    <cofactor evidence="1">
        <name>Mn(2+)</name>
        <dbReference type="ChEBI" id="CHEBI:29035"/>
    </cofactor>
</comment>
<comment type="similarity">
    <text evidence="1">Belongs to the NAD-dependent DNA ligase family. LigA subfamily.</text>
</comment>
<reference key="1">
    <citation type="journal article" date="2008" name="Biol. Direct">
        <title>Complete genome sequence of the extremely acidophilic methanotroph isolate V4, Methylacidiphilum infernorum, a representative of the bacterial phylum Verrucomicrobia.</title>
        <authorList>
            <person name="Hou S."/>
            <person name="Makarova K.S."/>
            <person name="Saw J.H."/>
            <person name="Senin P."/>
            <person name="Ly B.V."/>
            <person name="Zhou Z."/>
            <person name="Ren Y."/>
            <person name="Wang J."/>
            <person name="Galperin M.Y."/>
            <person name="Omelchenko M.V."/>
            <person name="Wolf Y.I."/>
            <person name="Yutin N."/>
            <person name="Koonin E.V."/>
            <person name="Stott M.B."/>
            <person name="Mountain B.W."/>
            <person name="Crowe M.A."/>
            <person name="Smirnova A.V."/>
            <person name="Dunfield P.F."/>
            <person name="Feng L."/>
            <person name="Wang L."/>
            <person name="Alam M."/>
        </authorList>
    </citation>
    <scope>NUCLEOTIDE SEQUENCE [LARGE SCALE GENOMIC DNA]</scope>
    <source>
        <strain>Isolate V4</strain>
    </source>
</reference>
<dbReference type="EC" id="6.5.1.2" evidence="1"/>
<dbReference type="EMBL" id="CP000975">
    <property type="protein sequence ID" value="ACD83755.1"/>
    <property type="molecule type" value="Genomic_DNA"/>
</dbReference>
<dbReference type="SMR" id="B3DWU2"/>
<dbReference type="STRING" id="481448.Minf_1701"/>
<dbReference type="KEGG" id="min:Minf_1701"/>
<dbReference type="eggNOG" id="COG0272">
    <property type="taxonomic scope" value="Bacteria"/>
</dbReference>
<dbReference type="HOGENOM" id="CLU_007764_2_1_0"/>
<dbReference type="OrthoDB" id="9759736at2"/>
<dbReference type="Proteomes" id="UP000009149">
    <property type="component" value="Chromosome"/>
</dbReference>
<dbReference type="GO" id="GO:0005829">
    <property type="term" value="C:cytosol"/>
    <property type="evidence" value="ECO:0007669"/>
    <property type="project" value="TreeGrafter"/>
</dbReference>
<dbReference type="GO" id="GO:0003677">
    <property type="term" value="F:DNA binding"/>
    <property type="evidence" value="ECO:0007669"/>
    <property type="project" value="InterPro"/>
</dbReference>
<dbReference type="GO" id="GO:0003911">
    <property type="term" value="F:DNA ligase (NAD+) activity"/>
    <property type="evidence" value="ECO:0007669"/>
    <property type="project" value="UniProtKB-UniRule"/>
</dbReference>
<dbReference type="GO" id="GO:0046872">
    <property type="term" value="F:metal ion binding"/>
    <property type="evidence" value="ECO:0007669"/>
    <property type="project" value="UniProtKB-KW"/>
</dbReference>
<dbReference type="GO" id="GO:0006281">
    <property type="term" value="P:DNA repair"/>
    <property type="evidence" value="ECO:0007669"/>
    <property type="project" value="UniProtKB-KW"/>
</dbReference>
<dbReference type="GO" id="GO:0006260">
    <property type="term" value="P:DNA replication"/>
    <property type="evidence" value="ECO:0007669"/>
    <property type="project" value="UniProtKB-KW"/>
</dbReference>
<dbReference type="CDD" id="cd17748">
    <property type="entry name" value="BRCT_DNA_ligase_like"/>
    <property type="match status" value="1"/>
</dbReference>
<dbReference type="CDD" id="cd00114">
    <property type="entry name" value="LIGANc"/>
    <property type="match status" value="1"/>
</dbReference>
<dbReference type="FunFam" id="1.10.150.20:FF:000006">
    <property type="entry name" value="DNA ligase"/>
    <property type="match status" value="1"/>
</dbReference>
<dbReference type="FunFam" id="1.10.150.20:FF:000007">
    <property type="entry name" value="DNA ligase"/>
    <property type="match status" value="1"/>
</dbReference>
<dbReference type="FunFam" id="1.10.287.610:FF:000002">
    <property type="entry name" value="DNA ligase"/>
    <property type="match status" value="1"/>
</dbReference>
<dbReference type="FunFam" id="2.40.50.140:FF:000012">
    <property type="entry name" value="DNA ligase"/>
    <property type="match status" value="1"/>
</dbReference>
<dbReference type="FunFam" id="3.30.470.30:FF:000001">
    <property type="entry name" value="DNA ligase"/>
    <property type="match status" value="1"/>
</dbReference>
<dbReference type="Gene3D" id="1.10.150.20">
    <property type="entry name" value="5' to 3' exonuclease, C-terminal subdomain"/>
    <property type="match status" value="2"/>
</dbReference>
<dbReference type="Gene3D" id="3.40.50.10190">
    <property type="entry name" value="BRCT domain"/>
    <property type="match status" value="1"/>
</dbReference>
<dbReference type="Gene3D" id="3.30.470.30">
    <property type="entry name" value="DNA ligase/mRNA capping enzyme"/>
    <property type="match status" value="1"/>
</dbReference>
<dbReference type="Gene3D" id="1.10.287.610">
    <property type="entry name" value="Helix hairpin bin"/>
    <property type="match status" value="1"/>
</dbReference>
<dbReference type="Gene3D" id="2.40.50.140">
    <property type="entry name" value="Nucleic acid-binding proteins"/>
    <property type="match status" value="1"/>
</dbReference>
<dbReference type="HAMAP" id="MF_01588">
    <property type="entry name" value="DNA_ligase_A"/>
    <property type="match status" value="1"/>
</dbReference>
<dbReference type="InterPro" id="IPR001357">
    <property type="entry name" value="BRCT_dom"/>
</dbReference>
<dbReference type="InterPro" id="IPR036420">
    <property type="entry name" value="BRCT_dom_sf"/>
</dbReference>
<dbReference type="InterPro" id="IPR041663">
    <property type="entry name" value="DisA/LigA_HHH"/>
</dbReference>
<dbReference type="InterPro" id="IPR001679">
    <property type="entry name" value="DNA_ligase"/>
</dbReference>
<dbReference type="InterPro" id="IPR018239">
    <property type="entry name" value="DNA_ligase_AS"/>
</dbReference>
<dbReference type="InterPro" id="IPR033136">
    <property type="entry name" value="DNA_ligase_CS"/>
</dbReference>
<dbReference type="InterPro" id="IPR013839">
    <property type="entry name" value="DNAligase_adenylation"/>
</dbReference>
<dbReference type="InterPro" id="IPR013840">
    <property type="entry name" value="DNAligase_N"/>
</dbReference>
<dbReference type="InterPro" id="IPR003583">
    <property type="entry name" value="Hlx-hairpin-Hlx_DNA-bd_motif"/>
</dbReference>
<dbReference type="InterPro" id="IPR012340">
    <property type="entry name" value="NA-bd_OB-fold"/>
</dbReference>
<dbReference type="InterPro" id="IPR004150">
    <property type="entry name" value="NAD_DNA_ligase_OB"/>
</dbReference>
<dbReference type="InterPro" id="IPR010994">
    <property type="entry name" value="RuvA_2-like"/>
</dbReference>
<dbReference type="NCBIfam" id="TIGR00575">
    <property type="entry name" value="dnlj"/>
    <property type="match status" value="1"/>
</dbReference>
<dbReference type="NCBIfam" id="NF005932">
    <property type="entry name" value="PRK07956.1"/>
    <property type="match status" value="1"/>
</dbReference>
<dbReference type="PANTHER" id="PTHR23389">
    <property type="entry name" value="CHROMOSOME TRANSMISSION FIDELITY FACTOR 18"/>
    <property type="match status" value="1"/>
</dbReference>
<dbReference type="PANTHER" id="PTHR23389:SF9">
    <property type="entry name" value="DNA LIGASE"/>
    <property type="match status" value="1"/>
</dbReference>
<dbReference type="Pfam" id="PF00533">
    <property type="entry name" value="BRCT"/>
    <property type="match status" value="1"/>
</dbReference>
<dbReference type="Pfam" id="PF01653">
    <property type="entry name" value="DNA_ligase_aden"/>
    <property type="match status" value="1"/>
</dbReference>
<dbReference type="Pfam" id="PF03120">
    <property type="entry name" value="DNA_ligase_OB"/>
    <property type="match status" value="1"/>
</dbReference>
<dbReference type="Pfam" id="PF12826">
    <property type="entry name" value="HHH_2"/>
    <property type="match status" value="1"/>
</dbReference>
<dbReference type="Pfam" id="PF14520">
    <property type="entry name" value="HHH_5"/>
    <property type="match status" value="1"/>
</dbReference>
<dbReference type="PIRSF" id="PIRSF001604">
    <property type="entry name" value="LigA"/>
    <property type="match status" value="1"/>
</dbReference>
<dbReference type="SMART" id="SM00292">
    <property type="entry name" value="BRCT"/>
    <property type="match status" value="1"/>
</dbReference>
<dbReference type="SMART" id="SM00278">
    <property type="entry name" value="HhH1"/>
    <property type="match status" value="3"/>
</dbReference>
<dbReference type="SMART" id="SM00532">
    <property type="entry name" value="LIGANc"/>
    <property type="match status" value="1"/>
</dbReference>
<dbReference type="SUPFAM" id="SSF52113">
    <property type="entry name" value="BRCT domain"/>
    <property type="match status" value="1"/>
</dbReference>
<dbReference type="SUPFAM" id="SSF56091">
    <property type="entry name" value="DNA ligase/mRNA capping enzyme, catalytic domain"/>
    <property type="match status" value="1"/>
</dbReference>
<dbReference type="SUPFAM" id="SSF50249">
    <property type="entry name" value="Nucleic acid-binding proteins"/>
    <property type="match status" value="1"/>
</dbReference>
<dbReference type="SUPFAM" id="SSF47781">
    <property type="entry name" value="RuvA domain 2-like"/>
    <property type="match status" value="1"/>
</dbReference>
<dbReference type="PROSITE" id="PS50172">
    <property type="entry name" value="BRCT"/>
    <property type="match status" value="1"/>
</dbReference>
<dbReference type="PROSITE" id="PS01055">
    <property type="entry name" value="DNA_LIGASE_N1"/>
    <property type="match status" value="1"/>
</dbReference>
<dbReference type="PROSITE" id="PS01056">
    <property type="entry name" value="DNA_LIGASE_N2"/>
    <property type="match status" value="1"/>
</dbReference>
<evidence type="ECO:0000255" key="1">
    <source>
        <dbReference type="HAMAP-Rule" id="MF_01588"/>
    </source>
</evidence>
<name>DNLJ_METI4</name>
<gene>
    <name evidence="1" type="primary">ligA</name>
    <name type="ordered locus">Minf_1701</name>
</gene>
<protein>
    <recommendedName>
        <fullName evidence="1">DNA ligase</fullName>
        <ecNumber evidence="1">6.5.1.2</ecNumber>
    </recommendedName>
    <alternativeName>
        <fullName evidence="1">Polydeoxyribonucleotide synthase [NAD(+)]</fullName>
    </alternativeName>
</protein>
<sequence length="689" mass="77418">MIESYLAFIFLNKVNKKKAPSLDSLGYEEIKKRHDELVKLIRKYDYAYYVEAHPLVSDQEYDNLYHELETLEKLHPELITPDSPTQRIGETPLSGFSQVTHEIPMLSLENTYSKEELFAFLERIKRALPGKKISFTVEPKIDGVSISAVYKNGLFSLGATRGNGTVGDDITQNLKTIRSLPLRLETPDPPEYLEVRGEAYMSPKDFERLNAQREKEGKVLFANPRNATAGSLKQLDPRVVAERPLAVVFYGAGKLVGMKCKTQEEWLNFLKKIGLPIPIVFWVCSNENEVYEAIGKLNECRNQLPYPTDGAAVKVNEWEYYSLLGYTAKAPRWAFAYKYGAERAKTRLNNVIFQVGRSGTITPVAEMDPVFLSGTTVSRATLHNFDQVKRLDVKIGDVVYLEKAGEVIPEVVGVDLNQRRGTEKEIVPPEFCPSCGEKLSWEGIFLRCENENCPAQLKERILHFAQRNAMDIQGLGESLVDQLVDKGIVKDVADIYDLDEETLVNLDRMGKKSAQNLLKAIEESKKKDLSRLIFGLGIPHIGQKASEDLARYFGTMDKLSHATEEELLNLPFIGEIMARSIVNYFRKEANRRRLEKLRKKGLNFVSTLSQASSGTLSGKTFVITGTLSEPRESIAQKIISKGGRVSNSLSRKTSYLVVGSDPGSKLQEAKKLGIPLINEQELLEMLHGG</sequence>
<proteinExistence type="inferred from homology"/>
<organism>
    <name type="scientific">Methylacidiphilum infernorum (isolate V4)</name>
    <name type="common">Methylokorus infernorum (strain V4)</name>
    <dbReference type="NCBI Taxonomy" id="481448"/>
    <lineage>
        <taxon>Bacteria</taxon>
        <taxon>Pseudomonadati</taxon>
        <taxon>Verrucomicrobiota</taxon>
        <taxon>Methylacidiphilae</taxon>
        <taxon>Methylacidiphilales</taxon>
        <taxon>Methylacidiphilaceae</taxon>
        <taxon>Methylacidiphilum (ex Ratnadevi et al. 2023)</taxon>
    </lineage>
</organism>
<accession>B3DWU2</accession>